<dbReference type="EC" id="3.1.3.-"/>
<dbReference type="EMBL" id="L42023">
    <property type="protein sequence ID" value="AAC22254.1"/>
    <property type="molecule type" value="Genomic_DNA"/>
</dbReference>
<dbReference type="PIR" id="D64155">
    <property type="entry name" value="D64155"/>
</dbReference>
<dbReference type="RefSeq" id="NP_438754.1">
    <property type="nucleotide sequence ID" value="NC_000907.1"/>
</dbReference>
<dbReference type="SMR" id="P44771"/>
<dbReference type="STRING" id="71421.HI_0597"/>
<dbReference type="DNASU" id="950123"/>
<dbReference type="EnsemblBacteria" id="AAC22254">
    <property type="protein sequence ID" value="AAC22254"/>
    <property type="gene ID" value="HI_0597"/>
</dbReference>
<dbReference type="KEGG" id="hin:HI_0597"/>
<dbReference type="PATRIC" id="fig|71421.8.peg.618"/>
<dbReference type="eggNOG" id="COG0561">
    <property type="taxonomic scope" value="Bacteria"/>
</dbReference>
<dbReference type="HOGENOM" id="CLU_044146_5_2_6"/>
<dbReference type="OrthoDB" id="5498330at2"/>
<dbReference type="PhylomeDB" id="P44771"/>
<dbReference type="BioCyc" id="HINF71421:G1GJ1-607-MONOMER"/>
<dbReference type="Proteomes" id="UP000000579">
    <property type="component" value="Chromosome"/>
</dbReference>
<dbReference type="GO" id="GO:0000287">
    <property type="term" value="F:magnesium ion binding"/>
    <property type="evidence" value="ECO:0000318"/>
    <property type="project" value="GO_Central"/>
</dbReference>
<dbReference type="GO" id="GO:0016791">
    <property type="term" value="F:phosphatase activity"/>
    <property type="evidence" value="ECO:0000318"/>
    <property type="project" value="GO_Central"/>
</dbReference>
<dbReference type="CDD" id="cd07516">
    <property type="entry name" value="HAD_Pase"/>
    <property type="match status" value="1"/>
</dbReference>
<dbReference type="Gene3D" id="3.30.1240.10">
    <property type="match status" value="1"/>
</dbReference>
<dbReference type="Gene3D" id="3.40.50.1000">
    <property type="entry name" value="HAD superfamily/HAD-like"/>
    <property type="match status" value="1"/>
</dbReference>
<dbReference type="InterPro" id="IPR000150">
    <property type="entry name" value="Cof"/>
</dbReference>
<dbReference type="InterPro" id="IPR036412">
    <property type="entry name" value="HAD-like_sf"/>
</dbReference>
<dbReference type="InterPro" id="IPR006379">
    <property type="entry name" value="HAD-SF_hydro_IIB"/>
</dbReference>
<dbReference type="InterPro" id="IPR023214">
    <property type="entry name" value="HAD_sf"/>
</dbReference>
<dbReference type="NCBIfam" id="TIGR00099">
    <property type="entry name" value="Cof-subfamily"/>
    <property type="match status" value="1"/>
</dbReference>
<dbReference type="NCBIfam" id="TIGR01484">
    <property type="entry name" value="HAD-SF-IIB"/>
    <property type="match status" value="1"/>
</dbReference>
<dbReference type="PANTHER" id="PTHR47267">
    <property type="match status" value="1"/>
</dbReference>
<dbReference type="PANTHER" id="PTHR47267:SF4">
    <property type="entry name" value="PYRIDOXAL PHOSPHATE PHOSPHATASE YIGL"/>
    <property type="match status" value="1"/>
</dbReference>
<dbReference type="Pfam" id="PF08282">
    <property type="entry name" value="Hydrolase_3"/>
    <property type="match status" value="1"/>
</dbReference>
<dbReference type="SFLD" id="SFLDG01140">
    <property type="entry name" value="C2.B:_Phosphomannomutase_and_P"/>
    <property type="match status" value="1"/>
</dbReference>
<dbReference type="SFLD" id="SFLDS00003">
    <property type="entry name" value="Haloacid_Dehalogenase"/>
    <property type="match status" value="1"/>
</dbReference>
<dbReference type="SUPFAM" id="SSF56784">
    <property type="entry name" value="HAD-like"/>
    <property type="match status" value="1"/>
</dbReference>
<dbReference type="PROSITE" id="PS01228">
    <property type="entry name" value="COF_1"/>
    <property type="match status" value="1"/>
</dbReference>
<dbReference type="PROSITE" id="PS01229">
    <property type="entry name" value="COF_2"/>
    <property type="match status" value="1"/>
</dbReference>
<comment type="cofactor">
    <cofactor evidence="1">
        <name>Mg(2+)</name>
        <dbReference type="ChEBI" id="CHEBI:18420"/>
    </cofactor>
</comment>
<comment type="similarity">
    <text evidence="2">Belongs to the HAD-like hydrolase superfamily. Cof family.</text>
</comment>
<evidence type="ECO:0000250" key="1"/>
<evidence type="ECO:0000305" key="2"/>
<feature type="chain" id="PRO_0000054428" description="Putative phosphatase HI_0597">
    <location>
        <begin position="1"/>
        <end position="272"/>
    </location>
</feature>
<feature type="active site" description="Nucleophile" evidence="1">
    <location>
        <position position="11"/>
    </location>
</feature>
<feature type="binding site" evidence="1">
    <location>
        <position position="11"/>
    </location>
    <ligand>
        <name>Mg(2+)</name>
        <dbReference type="ChEBI" id="CHEBI:18420"/>
    </ligand>
</feature>
<feature type="binding site" evidence="1">
    <location>
        <position position="12"/>
    </location>
    <ligand>
        <name>phosphate</name>
        <dbReference type="ChEBI" id="CHEBI:43474"/>
    </ligand>
</feature>
<feature type="binding site" evidence="1">
    <location>
        <position position="13"/>
    </location>
    <ligand>
        <name>Mg(2+)</name>
        <dbReference type="ChEBI" id="CHEBI:18420"/>
    </ligand>
</feature>
<feature type="binding site" evidence="1">
    <location>
        <begin position="45"/>
        <end position="46"/>
    </location>
    <ligand>
        <name>phosphate</name>
        <dbReference type="ChEBI" id="CHEBI:43474"/>
    </ligand>
</feature>
<feature type="binding site" evidence="1">
    <location>
        <position position="195"/>
    </location>
    <ligand>
        <name>phosphate</name>
        <dbReference type="ChEBI" id="CHEBI:43474"/>
    </ligand>
</feature>
<feature type="binding site" evidence="1">
    <location>
        <position position="218"/>
    </location>
    <ligand>
        <name>Mg(2+)</name>
        <dbReference type="ChEBI" id="CHEBI:18420"/>
    </ligand>
</feature>
<feature type="binding site" evidence="1">
    <location>
        <position position="221"/>
    </location>
    <ligand>
        <name>phosphate</name>
        <dbReference type="ChEBI" id="CHEBI:43474"/>
    </ligand>
</feature>
<reference key="1">
    <citation type="journal article" date="1995" name="Science">
        <title>Whole-genome random sequencing and assembly of Haemophilus influenzae Rd.</title>
        <authorList>
            <person name="Fleischmann R.D."/>
            <person name="Adams M.D."/>
            <person name="White O."/>
            <person name="Clayton R.A."/>
            <person name="Kirkness E.F."/>
            <person name="Kerlavage A.R."/>
            <person name="Bult C.J."/>
            <person name="Tomb J.-F."/>
            <person name="Dougherty B.A."/>
            <person name="Merrick J.M."/>
            <person name="McKenney K."/>
            <person name="Sutton G.G."/>
            <person name="FitzHugh W."/>
            <person name="Fields C.A."/>
            <person name="Gocayne J.D."/>
            <person name="Scott J.D."/>
            <person name="Shirley R."/>
            <person name="Liu L.-I."/>
            <person name="Glodek A."/>
            <person name="Kelley J.M."/>
            <person name="Weidman J.F."/>
            <person name="Phillips C.A."/>
            <person name="Spriggs T."/>
            <person name="Hedblom E."/>
            <person name="Cotton M.D."/>
            <person name="Utterback T.R."/>
            <person name="Hanna M.C."/>
            <person name="Nguyen D.T."/>
            <person name="Saudek D.M."/>
            <person name="Brandon R.C."/>
            <person name="Fine L.D."/>
            <person name="Fritchman J.L."/>
            <person name="Fuhrmann J.L."/>
            <person name="Geoghagen N.S.M."/>
            <person name="Gnehm C.L."/>
            <person name="McDonald L.A."/>
            <person name="Small K.V."/>
            <person name="Fraser C.M."/>
            <person name="Smith H.O."/>
            <person name="Venter J.C."/>
        </authorList>
    </citation>
    <scope>NUCLEOTIDE SEQUENCE [LARGE SCALE GENOMIC DNA]</scope>
    <source>
        <strain>ATCC 51907 / DSM 11121 / KW20 / Rd</strain>
    </source>
</reference>
<proteinExistence type="inferred from homology"/>
<organism>
    <name type="scientific">Haemophilus influenzae (strain ATCC 51907 / DSM 11121 / KW20 / Rd)</name>
    <dbReference type="NCBI Taxonomy" id="71421"/>
    <lineage>
        <taxon>Bacteria</taxon>
        <taxon>Pseudomonadati</taxon>
        <taxon>Pseudomonadota</taxon>
        <taxon>Gammaproteobacteria</taxon>
        <taxon>Pasteurellales</taxon>
        <taxon>Pasteurellaceae</taxon>
        <taxon>Haemophilus</taxon>
    </lineage>
</organism>
<name>Y597_HAEIN</name>
<accession>P44771</accession>
<protein>
    <recommendedName>
        <fullName>Putative phosphatase HI_0597</fullName>
        <ecNumber>3.1.3.-</ecNumber>
    </recommendedName>
</protein>
<sequence length="272" mass="30523">MNLPFRAMVSDLDGTLLTPEHLVGDLTIDTLRALEQKGVDIILATGRNHTDVSSILGKIGAERAVMITSNGARVRDLQGNLLYSNSLPEELVLELYKTPFDTSKVCMNSYQDEGWFTNKDIPAMRQFHKESGFDYNVVDFSKHHGRGTEKVFFIGKTPEDLVEVETYLRDKFGDVTTIVYSALACLEVMNKNVSKGDALKHLLESREYELKDCIAFGDGMNDVEMLSWAGKGCIMKDADIRLKMACPELEVIGSNKEESVARYLRTQFGLDY</sequence>
<gene>
    <name type="ordered locus">HI_0597</name>
</gene>
<keyword id="KW-0378">Hydrolase</keyword>
<keyword id="KW-0460">Magnesium</keyword>
<keyword id="KW-0479">Metal-binding</keyword>
<keyword id="KW-1185">Reference proteome</keyword>